<protein>
    <recommendedName>
        <fullName evidence="1">Ribosomal RNA small subunit methyltransferase H</fullName>
        <ecNumber evidence="1">2.1.1.199</ecNumber>
    </recommendedName>
    <alternativeName>
        <fullName evidence="1">16S rRNA m(4)C1402 methyltransferase</fullName>
    </alternativeName>
    <alternativeName>
        <fullName evidence="1">rRNA (cytosine-N(4)-)-methyltransferase RsmH</fullName>
    </alternativeName>
</protein>
<gene>
    <name evidence="1" type="primary">rsmH</name>
    <name type="synonym">mraW</name>
    <name type="ordered locus">BMA10247_3224</name>
</gene>
<name>RSMH_BURM7</name>
<proteinExistence type="inferred from homology"/>
<comment type="function">
    <text evidence="1">Specifically methylates the N4 position of cytidine in position 1402 (C1402) of 16S rRNA.</text>
</comment>
<comment type="catalytic activity">
    <reaction evidence="1">
        <text>cytidine(1402) in 16S rRNA + S-adenosyl-L-methionine = N(4)-methylcytidine(1402) in 16S rRNA + S-adenosyl-L-homocysteine + H(+)</text>
        <dbReference type="Rhea" id="RHEA:42928"/>
        <dbReference type="Rhea" id="RHEA-COMP:10286"/>
        <dbReference type="Rhea" id="RHEA-COMP:10287"/>
        <dbReference type="ChEBI" id="CHEBI:15378"/>
        <dbReference type="ChEBI" id="CHEBI:57856"/>
        <dbReference type="ChEBI" id="CHEBI:59789"/>
        <dbReference type="ChEBI" id="CHEBI:74506"/>
        <dbReference type="ChEBI" id="CHEBI:82748"/>
        <dbReference type="EC" id="2.1.1.199"/>
    </reaction>
</comment>
<comment type="subcellular location">
    <subcellularLocation>
        <location evidence="1">Cytoplasm</location>
    </subcellularLocation>
</comment>
<comment type="similarity">
    <text evidence="1">Belongs to the methyltransferase superfamily. RsmH family.</text>
</comment>
<feature type="chain" id="PRO_0000386773" description="Ribosomal RNA small subunit methyltransferase H">
    <location>
        <begin position="1"/>
        <end position="313"/>
    </location>
</feature>
<feature type="binding site" evidence="1">
    <location>
        <begin position="35"/>
        <end position="37"/>
    </location>
    <ligand>
        <name>S-adenosyl-L-methionine</name>
        <dbReference type="ChEBI" id="CHEBI:59789"/>
    </ligand>
</feature>
<feature type="binding site" evidence="1">
    <location>
        <position position="55"/>
    </location>
    <ligand>
        <name>S-adenosyl-L-methionine</name>
        <dbReference type="ChEBI" id="CHEBI:59789"/>
    </ligand>
</feature>
<feature type="binding site" evidence="1">
    <location>
        <position position="79"/>
    </location>
    <ligand>
        <name>S-adenosyl-L-methionine</name>
        <dbReference type="ChEBI" id="CHEBI:59789"/>
    </ligand>
</feature>
<feature type="binding site" evidence="1">
    <location>
        <position position="100"/>
    </location>
    <ligand>
        <name>S-adenosyl-L-methionine</name>
        <dbReference type="ChEBI" id="CHEBI:59789"/>
    </ligand>
</feature>
<feature type="binding site" evidence="1">
    <location>
        <position position="107"/>
    </location>
    <ligand>
        <name>S-adenosyl-L-methionine</name>
        <dbReference type="ChEBI" id="CHEBI:59789"/>
    </ligand>
</feature>
<keyword id="KW-0963">Cytoplasm</keyword>
<keyword id="KW-0489">Methyltransferase</keyword>
<keyword id="KW-0698">rRNA processing</keyword>
<keyword id="KW-0949">S-adenosyl-L-methionine</keyword>
<keyword id="KW-0808">Transferase</keyword>
<dbReference type="EC" id="2.1.1.199" evidence="1"/>
<dbReference type="EMBL" id="CP000548">
    <property type="protein sequence ID" value="ABO05116.1"/>
    <property type="molecule type" value="Genomic_DNA"/>
</dbReference>
<dbReference type="RefSeq" id="WP_004194427.1">
    <property type="nucleotide sequence ID" value="NZ_CP007802.1"/>
</dbReference>
<dbReference type="SMR" id="A3MR55"/>
<dbReference type="GeneID" id="93061635"/>
<dbReference type="KEGG" id="bmaz:BM44_145"/>
<dbReference type="KEGG" id="bmn:BMA10247_3224"/>
<dbReference type="PATRIC" id="fig|320389.8.peg.154"/>
<dbReference type="GO" id="GO:0005737">
    <property type="term" value="C:cytoplasm"/>
    <property type="evidence" value="ECO:0007669"/>
    <property type="project" value="UniProtKB-SubCell"/>
</dbReference>
<dbReference type="GO" id="GO:0071424">
    <property type="term" value="F:rRNA (cytosine-N4-)-methyltransferase activity"/>
    <property type="evidence" value="ECO:0007669"/>
    <property type="project" value="UniProtKB-UniRule"/>
</dbReference>
<dbReference type="GO" id="GO:0070475">
    <property type="term" value="P:rRNA base methylation"/>
    <property type="evidence" value="ECO:0007669"/>
    <property type="project" value="UniProtKB-UniRule"/>
</dbReference>
<dbReference type="Gene3D" id="1.10.150.170">
    <property type="entry name" value="Putative methyltransferase TM0872, insert domain"/>
    <property type="match status" value="1"/>
</dbReference>
<dbReference type="Gene3D" id="3.40.50.150">
    <property type="entry name" value="Vaccinia Virus protein VP39"/>
    <property type="match status" value="1"/>
</dbReference>
<dbReference type="HAMAP" id="MF_01007">
    <property type="entry name" value="16SrRNA_methyltr_H"/>
    <property type="match status" value="1"/>
</dbReference>
<dbReference type="InterPro" id="IPR002903">
    <property type="entry name" value="RsmH"/>
</dbReference>
<dbReference type="InterPro" id="IPR023397">
    <property type="entry name" value="SAM-dep_MeTrfase_MraW_recog"/>
</dbReference>
<dbReference type="InterPro" id="IPR029063">
    <property type="entry name" value="SAM-dependent_MTases_sf"/>
</dbReference>
<dbReference type="NCBIfam" id="TIGR00006">
    <property type="entry name" value="16S rRNA (cytosine(1402)-N(4))-methyltransferase RsmH"/>
    <property type="match status" value="1"/>
</dbReference>
<dbReference type="PANTHER" id="PTHR11265:SF0">
    <property type="entry name" value="12S RRNA N4-METHYLCYTIDINE METHYLTRANSFERASE"/>
    <property type="match status" value="1"/>
</dbReference>
<dbReference type="PANTHER" id="PTHR11265">
    <property type="entry name" value="S-ADENOSYL-METHYLTRANSFERASE MRAW"/>
    <property type="match status" value="1"/>
</dbReference>
<dbReference type="Pfam" id="PF01795">
    <property type="entry name" value="Methyltransf_5"/>
    <property type="match status" value="1"/>
</dbReference>
<dbReference type="PIRSF" id="PIRSF004486">
    <property type="entry name" value="MraW"/>
    <property type="match status" value="1"/>
</dbReference>
<dbReference type="SUPFAM" id="SSF81799">
    <property type="entry name" value="Putative methyltransferase TM0872, insert domain"/>
    <property type="match status" value="1"/>
</dbReference>
<dbReference type="SUPFAM" id="SSF53335">
    <property type="entry name" value="S-adenosyl-L-methionine-dependent methyltransferases"/>
    <property type="match status" value="1"/>
</dbReference>
<evidence type="ECO:0000255" key="1">
    <source>
        <dbReference type="HAMAP-Rule" id="MF_01007"/>
    </source>
</evidence>
<accession>A3MR55</accession>
<reference key="1">
    <citation type="journal article" date="2010" name="Genome Biol. Evol.">
        <title>Continuing evolution of Burkholderia mallei through genome reduction and large-scale rearrangements.</title>
        <authorList>
            <person name="Losada L."/>
            <person name="Ronning C.M."/>
            <person name="DeShazer D."/>
            <person name="Woods D."/>
            <person name="Fedorova N."/>
            <person name="Kim H.S."/>
            <person name="Shabalina S.A."/>
            <person name="Pearson T.R."/>
            <person name="Brinkac L."/>
            <person name="Tan P."/>
            <person name="Nandi T."/>
            <person name="Crabtree J."/>
            <person name="Badger J."/>
            <person name="Beckstrom-Sternberg S."/>
            <person name="Saqib M."/>
            <person name="Schutzer S.E."/>
            <person name="Keim P."/>
            <person name="Nierman W.C."/>
        </authorList>
    </citation>
    <scope>NUCLEOTIDE SEQUENCE [LARGE SCALE GENOMIC DNA]</scope>
    <source>
        <strain>NCTC 10247</strain>
    </source>
</reference>
<organism>
    <name type="scientific">Burkholderia mallei (strain NCTC 10247)</name>
    <dbReference type="NCBI Taxonomy" id="320389"/>
    <lineage>
        <taxon>Bacteria</taxon>
        <taxon>Pseudomonadati</taxon>
        <taxon>Pseudomonadota</taxon>
        <taxon>Betaproteobacteria</taxon>
        <taxon>Burkholderiales</taxon>
        <taxon>Burkholderiaceae</taxon>
        <taxon>Burkholderia</taxon>
        <taxon>pseudomallei group</taxon>
    </lineage>
</organism>
<sequence>MGNEFQHRTVLLDEAVDALVTRPDGVYVDGTFGRGGHSRAVLARLGDAGRLIAFDKDPRAIETAESIEDARFEIVHDSFAAMKGALDARGVGRVSGVLLDLGVSSPQVDDPARGFSFRANGPLDMRMDPTRGESAAEWLARASVQELTEVIRDYGEERFAFQIAKAIVARRAESDRLGPLDSTGELAQIVGHVVKTREKGKDPATRTFQAIRIHVNQELADLQVVLEAALSLLEQGGRLVVISFHSLEDRIVKRFLQAHASAPAVDRRLPIRAADLPRPPLKLLGRMFPNDAEVAANPRARSAVMRIAERVAP</sequence>